<protein>
    <recommendedName>
        <fullName evidence="1">NAD(+) phosphorylase MbcT</fullName>
        <ecNumber evidence="1">2.4.2.-</ecNumber>
    </recommendedName>
    <alternativeName>
        <fullName evidence="1">Mycobacterial cidal toxin MbcT</fullName>
    </alternativeName>
</protein>
<dbReference type="EC" id="2.4.2.-" evidence="1"/>
<dbReference type="EMBL" id="AE000516">
    <property type="protein sequence ID" value="AAK46319.1"/>
    <property type="molecule type" value="Genomic_DNA"/>
</dbReference>
<dbReference type="PIR" id="C70757">
    <property type="entry name" value="C70757"/>
</dbReference>
<dbReference type="RefSeq" id="WP_003410001.1">
    <property type="nucleotide sequence ID" value="NZ_KK341227.1"/>
</dbReference>
<dbReference type="SMR" id="P9WLP8"/>
<dbReference type="KEGG" id="mtc:MT2043"/>
<dbReference type="PATRIC" id="fig|83331.31.peg.2200"/>
<dbReference type="HOGENOM" id="CLU_124933_0_0_11"/>
<dbReference type="Proteomes" id="UP000001020">
    <property type="component" value="Chromosome"/>
</dbReference>
<dbReference type="GO" id="GO:0016779">
    <property type="term" value="F:nucleotidyltransferase activity"/>
    <property type="evidence" value="ECO:0007669"/>
    <property type="project" value="UniProtKB-KW"/>
</dbReference>
<dbReference type="InterPro" id="IPR014914">
    <property type="entry name" value="RES_dom"/>
</dbReference>
<dbReference type="Pfam" id="PF08808">
    <property type="entry name" value="RES"/>
    <property type="match status" value="1"/>
</dbReference>
<dbReference type="SMART" id="SM00953">
    <property type="entry name" value="RES"/>
    <property type="match status" value="1"/>
</dbReference>
<gene>
    <name type="primary">mbcT</name>
    <name type="ordered locus">MT2043</name>
</gene>
<reference key="1">
    <citation type="journal article" date="2002" name="J. Bacteriol.">
        <title>Whole-genome comparison of Mycobacterium tuberculosis clinical and laboratory strains.</title>
        <authorList>
            <person name="Fleischmann R.D."/>
            <person name="Alland D."/>
            <person name="Eisen J.A."/>
            <person name="Carpenter L."/>
            <person name="White O."/>
            <person name="Peterson J.D."/>
            <person name="DeBoy R.T."/>
            <person name="Dodson R.J."/>
            <person name="Gwinn M.L."/>
            <person name="Haft D.H."/>
            <person name="Hickey E.K."/>
            <person name="Kolonay J.F."/>
            <person name="Nelson W.C."/>
            <person name="Umayam L.A."/>
            <person name="Ermolaeva M.D."/>
            <person name="Salzberg S.L."/>
            <person name="Delcher A."/>
            <person name="Utterback T.R."/>
            <person name="Weidman J.F."/>
            <person name="Khouri H.M."/>
            <person name="Gill J."/>
            <person name="Mikula A."/>
            <person name="Bishai W."/>
            <person name="Jacobs W.R. Jr."/>
            <person name="Venter J.C."/>
            <person name="Fraser C.M."/>
        </authorList>
    </citation>
    <scope>NUCLEOTIDE SEQUENCE [LARGE SCALE GENOMIC DNA]</scope>
    <source>
        <strain>CDC 1551 / Oshkosh</strain>
    </source>
</reference>
<reference key="2">
    <citation type="journal article" date="2010" name="PLoS Pathog.">
        <title>Functional genetic diversity among Mycobacterium tuberculosis complex clinical isolates: delineation of conserved core and lineage-specific transcriptomes during intracellular survival.</title>
        <authorList>
            <person name="Homolka S."/>
            <person name="Niemann S."/>
            <person name="Russell D.G."/>
            <person name="Rohde K.H."/>
        </authorList>
    </citation>
    <scope>INDUCTION IN MOUSE INFECTION MODEL</scope>
    <source>
        <strain>CDC 1551 / Oshkosh</strain>
    </source>
</reference>
<keyword id="KW-0520">NAD</keyword>
<keyword id="KW-0548">Nucleotidyltransferase</keyword>
<keyword id="KW-1185">Reference proteome</keyword>
<keyword id="KW-1277">Toxin-antitoxin system</keyword>
<keyword id="KW-0808">Transferase</keyword>
<accession>P9WLP8</accession>
<accession>L0TB64</accession>
<accession>P64907</accession>
<accession>Q10869</accession>
<feature type="chain" id="PRO_0000427441" description="NAD(+) phosphorylase MbcT">
    <location>
        <begin position="1"/>
        <end position="186"/>
    </location>
</feature>
<name>MBCT_MYCTO</name>
<sequence length="186" mass="20281">MSDALDEGLVQRIDARGTIEWSETCYRYTGAHRDALSGEGARRFGGRWNPPLLFPAIYLADSAQACMVEVERAAQAASTTAEKMLEAAYRLHTIDVTDLAVLDLTTPQAREAVGLENDDIYGDDWSGCQAVGHAAWFLHMQGVLVPAAGGVGLVVTAYEQRTRPGQLQLRQSVDLTPALYQELRAT</sequence>
<proteinExistence type="evidence at transcript level"/>
<organism>
    <name type="scientific">Mycobacterium tuberculosis (strain CDC 1551 / Oshkosh)</name>
    <dbReference type="NCBI Taxonomy" id="83331"/>
    <lineage>
        <taxon>Bacteria</taxon>
        <taxon>Bacillati</taxon>
        <taxon>Actinomycetota</taxon>
        <taxon>Actinomycetes</taxon>
        <taxon>Mycobacteriales</taxon>
        <taxon>Mycobacteriaceae</taxon>
        <taxon>Mycobacterium</taxon>
        <taxon>Mycobacterium tuberculosis complex</taxon>
    </lineage>
</organism>
<comment type="function">
    <text evidence="1">Toxic component of a type II toxin-antitoxin (TA) system. Degrades NAD(+) by phosphorolysis. Neutralized by its cognate antitoxin MbcA.</text>
</comment>
<comment type="catalytic activity">
    <reaction evidence="1">
        <text>phosphate + NAD(+) = ADP-alpha-D-ribose 1''-phosphate + nicotinamide + H(+)</text>
        <dbReference type="Rhea" id="RHEA:20788"/>
        <dbReference type="ChEBI" id="CHEBI:15378"/>
        <dbReference type="ChEBI" id="CHEBI:17154"/>
        <dbReference type="ChEBI" id="CHEBI:43474"/>
        <dbReference type="ChEBI" id="CHEBI:57540"/>
        <dbReference type="ChEBI" id="CHEBI:58753"/>
    </reaction>
</comment>
<comment type="subunit">
    <text evidence="1">Forms a heterotetramer with cognate antitoxin MbcA.</text>
</comment>
<comment type="induction">
    <text evidence="2">Expression induced in both active and resting C57BL/6 mouse macrophages.</text>
</comment>
<comment type="similarity">
    <text evidence="3">Belongs to the MbcT/ParT/Res family.</text>
</comment>
<evidence type="ECO:0000250" key="1">
    <source>
        <dbReference type="UniProtKB" id="P9WLP9"/>
    </source>
</evidence>
<evidence type="ECO:0000269" key="2">
    <source>
    </source>
</evidence>
<evidence type="ECO:0000305" key="3"/>